<name>NGAL_MOUSE</name>
<proteinExistence type="evidence at protein level"/>
<dbReference type="EMBL" id="X14607">
    <property type="protein sequence ID" value="CAA32762.1"/>
    <property type="molecule type" value="mRNA"/>
</dbReference>
<dbReference type="EMBL" id="X81627">
    <property type="protein sequence ID" value="CAA57283.1"/>
    <property type="molecule type" value="Genomic_DNA"/>
</dbReference>
<dbReference type="EMBL" id="AK149774">
    <property type="protein sequence ID" value="BAE29077.1"/>
    <property type="molecule type" value="mRNA"/>
</dbReference>
<dbReference type="EMBL" id="AL808027">
    <property type="status" value="NOT_ANNOTATED_CDS"/>
    <property type="molecule type" value="Genomic_DNA"/>
</dbReference>
<dbReference type="EMBL" id="CH466542">
    <property type="protein sequence ID" value="EDL08545.1"/>
    <property type="molecule type" value="Genomic_DNA"/>
</dbReference>
<dbReference type="EMBL" id="BC132069">
    <property type="protein sequence ID" value="AAI32070.1"/>
    <property type="molecule type" value="mRNA"/>
</dbReference>
<dbReference type="EMBL" id="BC132071">
    <property type="protein sequence ID" value="AAI32072.1"/>
    <property type="molecule type" value="mRNA"/>
</dbReference>
<dbReference type="EMBL" id="S82469">
    <property type="status" value="NOT_ANNOTATED_CDS"/>
    <property type="molecule type" value="mRNA"/>
</dbReference>
<dbReference type="CCDS" id="CCDS15913.1"/>
<dbReference type="PIR" id="S07397">
    <property type="entry name" value="S07397"/>
</dbReference>
<dbReference type="RefSeq" id="NP_032517.1">
    <property type="nucleotide sequence ID" value="NM_008491.2"/>
</dbReference>
<dbReference type="PDB" id="3S26">
    <property type="method" value="X-ray"/>
    <property type="resolution" value="1.80 A"/>
    <property type="chains" value="A=21-200"/>
</dbReference>
<dbReference type="PDB" id="3U9P">
    <property type="method" value="X-ray"/>
    <property type="resolution" value="2.80 A"/>
    <property type="chains" value="C/D=21-200"/>
</dbReference>
<dbReference type="PDBsum" id="3S26"/>
<dbReference type="PDBsum" id="3U9P"/>
<dbReference type="SMR" id="P11672"/>
<dbReference type="BioGRID" id="201121">
    <property type="interactions" value="3"/>
</dbReference>
<dbReference type="FunCoup" id="P11672">
    <property type="interactions" value="149"/>
</dbReference>
<dbReference type="IntAct" id="P11672">
    <property type="interactions" value="1"/>
</dbReference>
<dbReference type="STRING" id="10090.ENSMUSP00000053962"/>
<dbReference type="GlyCosmos" id="P11672">
    <property type="glycosylation" value="2 sites, No reported glycans"/>
</dbReference>
<dbReference type="GlyGen" id="P11672">
    <property type="glycosylation" value="2 sites"/>
</dbReference>
<dbReference type="iPTMnet" id="P11672"/>
<dbReference type="PhosphoSitePlus" id="P11672"/>
<dbReference type="jPOST" id="P11672"/>
<dbReference type="PaxDb" id="10090-ENSMUSP00000053962"/>
<dbReference type="PeptideAtlas" id="P11672"/>
<dbReference type="ProteomicsDB" id="287504"/>
<dbReference type="ABCD" id="P11672">
    <property type="antibodies" value="1 sequenced antibody"/>
</dbReference>
<dbReference type="Antibodypedia" id="1059">
    <property type="antibodies" value="1810 antibodies from 48 providers"/>
</dbReference>
<dbReference type="DNASU" id="16819"/>
<dbReference type="Ensembl" id="ENSMUST00000050785.14">
    <property type="protein sequence ID" value="ENSMUSP00000053962.9"/>
    <property type="gene ID" value="ENSMUSG00000026822.15"/>
</dbReference>
<dbReference type="GeneID" id="16819"/>
<dbReference type="KEGG" id="mmu:16819"/>
<dbReference type="UCSC" id="uc008jfl.1">
    <property type="organism name" value="mouse"/>
</dbReference>
<dbReference type="AGR" id="MGI:96757"/>
<dbReference type="CTD" id="3934"/>
<dbReference type="MGI" id="MGI:96757">
    <property type="gene designation" value="Lcn2"/>
</dbReference>
<dbReference type="VEuPathDB" id="HostDB:ENSMUSG00000026822"/>
<dbReference type="eggNOG" id="ENOG502T7VZ">
    <property type="taxonomic scope" value="Eukaryota"/>
</dbReference>
<dbReference type="GeneTree" id="ENSGT01050000244868"/>
<dbReference type="HOGENOM" id="CLU_094061_2_0_1"/>
<dbReference type="InParanoid" id="P11672"/>
<dbReference type="OMA" id="IDKCIDD"/>
<dbReference type="OrthoDB" id="75427at9989"/>
<dbReference type="PhylomeDB" id="P11672"/>
<dbReference type="TreeFam" id="TF336103"/>
<dbReference type="Reactome" id="R-MMU-6798695">
    <property type="pathway name" value="Neutrophil degranulation"/>
</dbReference>
<dbReference type="Reactome" id="R-MMU-6799990">
    <property type="pathway name" value="Metal sequestration by antimicrobial proteins"/>
</dbReference>
<dbReference type="Reactome" id="R-MMU-917937">
    <property type="pathway name" value="Iron uptake and transport"/>
</dbReference>
<dbReference type="BioGRID-ORCS" id="16819">
    <property type="hits" value="1 hit in 79 CRISPR screens"/>
</dbReference>
<dbReference type="ChiTaRS" id="Lcn2">
    <property type="organism name" value="mouse"/>
</dbReference>
<dbReference type="EvolutionaryTrace" id="P11672"/>
<dbReference type="PRO" id="PR:P11672"/>
<dbReference type="Proteomes" id="UP000000589">
    <property type="component" value="Chromosome 2"/>
</dbReference>
<dbReference type="RNAct" id="P11672">
    <property type="molecule type" value="protein"/>
</dbReference>
<dbReference type="Bgee" id="ENSMUSG00000026822">
    <property type="expression patterns" value="Expressed in granulocyte and 120 other cell types or tissues"/>
</dbReference>
<dbReference type="ExpressionAtlas" id="P11672">
    <property type="expression patterns" value="baseline and differential"/>
</dbReference>
<dbReference type="GO" id="GO:0060205">
    <property type="term" value="C:cytoplasmic vesicle lumen"/>
    <property type="evidence" value="ECO:0007669"/>
    <property type="project" value="UniProtKB-SubCell"/>
</dbReference>
<dbReference type="GO" id="GO:0005829">
    <property type="term" value="C:cytosol"/>
    <property type="evidence" value="ECO:0000304"/>
    <property type="project" value="Reactome"/>
</dbReference>
<dbReference type="GO" id="GO:0005576">
    <property type="term" value="C:extracellular region"/>
    <property type="evidence" value="ECO:0000314"/>
    <property type="project" value="UniProtKB"/>
</dbReference>
<dbReference type="GO" id="GO:0005615">
    <property type="term" value="C:extracellular space"/>
    <property type="evidence" value="ECO:0000314"/>
    <property type="project" value="MGI"/>
</dbReference>
<dbReference type="GO" id="GO:1903981">
    <property type="term" value="F:enterobactin binding"/>
    <property type="evidence" value="ECO:0000250"/>
    <property type="project" value="UniProtKB"/>
</dbReference>
<dbReference type="GO" id="GO:0042802">
    <property type="term" value="F:identical protein binding"/>
    <property type="evidence" value="ECO:0007669"/>
    <property type="project" value="Ensembl"/>
</dbReference>
<dbReference type="GO" id="GO:0005506">
    <property type="term" value="F:iron ion binding"/>
    <property type="evidence" value="ECO:0000314"/>
    <property type="project" value="UniProtKB"/>
</dbReference>
<dbReference type="GO" id="GO:0140315">
    <property type="term" value="F:iron ion sequestering activity"/>
    <property type="evidence" value="ECO:0000250"/>
    <property type="project" value="UniProtKB"/>
</dbReference>
<dbReference type="GO" id="GO:0002020">
    <property type="term" value="F:protease binding"/>
    <property type="evidence" value="ECO:0007669"/>
    <property type="project" value="Ensembl"/>
</dbReference>
<dbReference type="GO" id="GO:0006953">
    <property type="term" value="P:acute-phase response"/>
    <property type="evidence" value="ECO:0007669"/>
    <property type="project" value="Ensembl"/>
</dbReference>
<dbReference type="GO" id="GO:1904646">
    <property type="term" value="P:cellular response to amyloid-beta"/>
    <property type="evidence" value="ECO:0007669"/>
    <property type="project" value="Ensembl"/>
</dbReference>
<dbReference type="GO" id="GO:0070301">
    <property type="term" value="P:cellular response to hydrogen peroxide"/>
    <property type="evidence" value="ECO:0007669"/>
    <property type="project" value="Ensembl"/>
</dbReference>
<dbReference type="GO" id="GO:0071456">
    <property type="term" value="P:cellular response to hypoxia"/>
    <property type="evidence" value="ECO:0007669"/>
    <property type="project" value="Ensembl"/>
</dbReference>
<dbReference type="GO" id="GO:0036295">
    <property type="term" value="P:cellular response to increased oxygen levels"/>
    <property type="evidence" value="ECO:0007669"/>
    <property type="project" value="Ensembl"/>
</dbReference>
<dbReference type="GO" id="GO:0071347">
    <property type="term" value="P:cellular response to interleukin-1"/>
    <property type="evidence" value="ECO:0007669"/>
    <property type="project" value="Ensembl"/>
</dbReference>
<dbReference type="GO" id="GO:0071354">
    <property type="term" value="P:cellular response to interleukin-6"/>
    <property type="evidence" value="ECO:0007669"/>
    <property type="project" value="Ensembl"/>
</dbReference>
<dbReference type="GO" id="GO:0071222">
    <property type="term" value="P:cellular response to lipopolysaccharide"/>
    <property type="evidence" value="ECO:0007669"/>
    <property type="project" value="Ensembl"/>
</dbReference>
<dbReference type="GO" id="GO:1990090">
    <property type="term" value="P:cellular response to nerve growth factor stimulus"/>
    <property type="evidence" value="ECO:0007669"/>
    <property type="project" value="Ensembl"/>
</dbReference>
<dbReference type="GO" id="GO:0031669">
    <property type="term" value="P:cellular response to nutrient levels"/>
    <property type="evidence" value="ECO:0007669"/>
    <property type="project" value="Ensembl"/>
</dbReference>
<dbReference type="GO" id="GO:0071356">
    <property type="term" value="P:cellular response to tumor necrosis factor"/>
    <property type="evidence" value="ECO:0007669"/>
    <property type="project" value="Ensembl"/>
</dbReference>
<dbReference type="GO" id="GO:0071481">
    <property type="term" value="P:cellular response to X-ray"/>
    <property type="evidence" value="ECO:0007669"/>
    <property type="project" value="Ensembl"/>
</dbReference>
<dbReference type="GO" id="GO:0042742">
    <property type="term" value="P:defense response to bacterium"/>
    <property type="evidence" value="ECO:0000250"/>
    <property type="project" value="UniProtKB"/>
</dbReference>
<dbReference type="GO" id="GO:0097192">
    <property type="term" value="P:extrinsic apoptotic signaling pathway in absence of ligand"/>
    <property type="evidence" value="ECO:0000314"/>
    <property type="project" value="MGI"/>
</dbReference>
<dbReference type="GO" id="GO:0045087">
    <property type="term" value="P:innate immune response"/>
    <property type="evidence" value="ECO:0000315"/>
    <property type="project" value="UniProtKB"/>
</dbReference>
<dbReference type="GO" id="GO:0007616">
    <property type="term" value="P:long-term memory"/>
    <property type="evidence" value="ECO:0007669"/>
    <property type="project" value="Ensembl"/>
</dbReference>
<dbReference type="GO" id="GO:0110091">
    <property type="term" value="P:negative regulation of hippocampal neuron apoptotic process"/>
    <property type="evidence" value="ECO:0007669"/>
    <property type="project" value="Ensembl"/>
</dbReference>
<dbReference type="GO" id="GO:0031346">
    <property type="term" value="P:positive regulation of cell projection organization"/>
    <property type="evidence" value="ECO:0007669"/>
    <property type="project" value="Ensembl"/>
</dbReference>
<dbReference type="GO" id="GO:0120162">
    <property type="term" value="P:positive regulation of cold-induced thermogenesis"/>
    <property type="evidence" value="ECO:0000315"/>
    <property type="project" value="YuBioLab"/>
</dbReference>
<dbReference type="GO" id="GO:0010595">
    <property type="term" value="P:positive regulation of endothelial cell migration"/>
    <property type="evidence" value="ECO:0007669"/>
    <property type="project" value="Ensembl"/>
</dbReference>
<dbReference type="GO" id="GO:1905956">
    <property type="term" value="P:positive regulation of endothelial tube morphogenesis"/>
    <property type="evidence" value="ECO:0007669"/>
    <property type="project" value="Ensembl"/>
</dbReference>
<dbReference type="GO" id="GO:0010628">
    <property type="term" value="P:positive regulation of gene expression"/>
    <property type="evidence" value="ECO:0007669"/>
    <property type="project" value="Ensembl"/>
</dbReference>
<dbReference type="GO" id="GO:0110090">
    <property type="term" value="P:positive regulation of hippocampal neuron apoptotic process"/>
    <property type="evidence" value="ECO:0007669"/>
    <property type="project" value="Ensembl"/>
</dbReference>
<dbReference type="GO" id="GO:1904440">
    <property type="term" value="P:positive regulation of iron ion import across plasma membrane"/>
    <property type="evidence" value="ECO:0007669"/>
    <property type="project" value="Ensembl"/>
</dbReference>
<dbReference type="GO" id="GO:1903428">
    <property type="term" value="P:positive regulation of reactive oxygen species biosynthetic process"/>
    <property type="evidence" value="ECO:0007669"/>
    <property type="project" value="Ensembl"/>
</dbReference>
<dbReference type="GO" id="GO:0009617">
    <property type="term" value="P:response to bacterium"/>
    <property type="evidence" value="ECO:0000270"/>
    <property type="project" value="MGI"/>
</dbReference>
<dbReference type="GO" id="GO:0009637">
    <property type="term" value="P:response to blue light"/>
    <property type="evidence" value="ECO:0007669"/>
    <property type="project" value="Ensembl"/>
</dbReference>
<dbReference type="GO" id="GO:0009750">
    <property type="term" value="P:response to fructose"/>
    <property type="evidence" value="ECO:0007669"/>
    <property type="project" value="Ensembl"/>
</dbReference>
<dbReference type="GO" id="GO:0009635">
    <property type="term" value="P:response to herbicide"/>
    <property type="evidence" value="ECO:0007669"/>
    <property type="project" value="Ensembl"/>
</dbReference>
<dbReference type="GO" id="GO:0010040">
    <property type="term" value="P:response to iron(II) ion"/>
    <property type="evidence" value="ECO:0007669"/>
    <property type="project" value="Ensembl"/>
</dbReference>
<dbReference type="GO" id="GO:1904373">
    <property type="term" value="P:response to kainic acid"/>
    <property type="evidence" value="ECO:0007669"/>
    <property type="project" value="Ensembl"/>
</dbReference>
<dbReference type="GO" id="GO:0010046">
    <property type="term" value="P:response to mycotoxin"/>
    <property type="evidence" value="ECO:0007669"/>
    <property type="project" value="Ensembl"/>
</dbReference>
<dbReference type="GO" id="GO:0009615">
    <property type="term" value="P:response to virus"/>
    <property type="evidence" value="ECO:0000314"/>
    <property type="project" value="MGI"/>
</dbReference>
<dbReference type="GO" id="GO:0009410">
    <property type="term" value="P:response to xenobiotic stimulus"/>
    <property type="evidence" value="ECO:0007669"/>
    <property type="project" value="Ensembl"/>
</dbReference>
<dbReference type="GO" id="GO:0007614">
    <property type="term" value="P:short-term memory"/>
    <property type="evidence" value="ECO:0007669"/>
    <property type="project" value="Ensembl"/>
</dbReference>
<dbReference type="GO" id="GO:0015891">
    <property type="term" value="P:siderophore transport"/>
    <property type="evidence" value="ECO:0000314"/>
    <property type="project" value="UniProtKB"/>
</dbReference>
<dbReference type="CDD" id="cd19457">
    <property type="entry name" value="lipocalin_2-like"/>
    <property type="match status" value="1"/>
</dbReference>
<dbReference type="Gene3D" id="2.40.128.20">
    <property type="match status" value="1"/>
</dbReference>
<dbReference type="InterPro" id="IPR012674">
    <property type="entry name" value="Calycin"/>
</dbReference>
<dbReference type="InterPro" id="IPR003087">
    <property type="entry name" value="LCN2/LCN12"/>
</dbReference>
<dbReference type="InterPro" id="IPR002345">
    <property type="entry name" value="Lipocalin"/>
</dbReference>
<dbReference type="InterPro" id="IPR022272">
    <property type="entry name" value="Lipocalin_CS"/>
</dbReference>
<dbReference type="InterPro" id="IPR000566">
    <property type="entry name" value="Lipocln_cytosolic_FA-bd_dom"/>
</dbReference>
<dbReference type="PANTHER" id="PTHR11430">
    <property type="entry name" value="LIPOCALIN"/>
    <property type="match status" value="1"/>
</dbReference>
<dbReference type="PANTHER" id="PTHR11430:SF13">
    <property type="entry name" value="NEUTROPHIL GELATINASE-ASSOCIATED LIPOCALIN"/>
    <property type="match status" value="1"/>
</dbReference>
<dbReference type="Pfam" id="PF00061">
    <property type="entry name" value="Lipocalin"/>
    <property type="match status" value="1"/>
</dbReference>
<dbReference type="PRINTS" id="PR00179">
    <property type="entry name" value="LIPOCALIN"/>
</dbReference>
<dbReference type="PRINTS" id="PR01275">
    <property type="entry name" value="NGELATINASE"/>
</dbReference>
<dbReference type="SUPFAM" id="SSF50814">
    <property type="entry name" value="Lipocalins"/>
    <property type="match status" value="1"/>
</dbReference>
<dbReference type="PROSITE" id="PS00213">
    <property type="entry name" value="LIPOCALIN"/>
    <property type="match status" value="1"/>
</dbReference>
<feature type="signal peptide" evidence="1">
    <location>
        <begin position="1"/>
        <end position="20"/>
    </location>
</feature>
<feature type="chain" id="PRO_0000017934" description="Neutrophil gelatinase-associated lipocalin">
    <location>
        <begin position="21"/>
        <end position="200"/>
    </location>
</feature>
<feature type="binding site" evidence="2">
    <location>
        <begin position="72"/>
        <end position="74"/>
    </location>
    <ligand>
        <name>a carboxymycobactin</name>
        <dbReference type="ChEBI" id="CHEBI:178051"/>
    </ligand>
</feature>
<feature type="binding site" evidence="2">
    <location>
        <position position="128"/>
    </location>
    <ligand>
        <name>enterobactin</name>
        <dbReference type="ChEBI" id="CHEBI:77805"/>
    </ligand>
</feature>
<feature type="binding site" evidence="2">
    <location>
        <position position="147"/>
    </location>
    <ligand>
        <name>a carboxymycobactin</name>
        <dbReference type="ChEBI" id="CHEBI:178051"/>
    </ligand>
</feature>
<feature type="binding site" evidence="2">
    <location>
        <position position="156"/>
    </location>
    <ligand>
        <name>a carboxymycobactin</name>
        <dbReference type="ChEBI" id="CHEBI:178051"/>
    </ligand>
</feature>
<feature type="binding site" evidence="2">
    <location>
        <position position="156"/>
    </location>
    <ligand>
        <name>enterobactin</name>
        <dbReference type="ChEBI" id="CHEBI:77805"/>
    </ligand>
</feature>
<feature type="binding site" evidence="2">
    <location>
        <position position="160"/>
    </location>
    <ligand>
        <name>a carboxymycobactin</name>
        <dbReference type="ChEBI" id="CHEBI:178051"/>
    </ligand>
</feature>
<feature type="modified residue" description="Pyrrolidone carboxylic acid" evidence="2">
    <location>
        <position position="21"/>
    </location>
</feature>
<feature type="glycosylation site" description="N-linked (GlcNAc...) asparagine" evidence="3">
    <location>
        <position position="81"/>
    </location>
</feature>
<feature type="glycosylation site" description="N-linked (GlcNAc...) asparagine" evidence="9">
    <location>
        <position position="85"/>
    </location>
</feature>
<feature type="disulfide bond" evidence="9">
    <location>
        <begin position="98"/>
        <end position="197"/>
    </location>
</feature>
<feature type="turn" evidence="16">
    <location>
        <begin position="33"/>
        <end position="35"/>
    </location>
</feature>
<feature type="turn" evidence="16">
    <location>
        <begin position="44"/>
        <end position="47"/>
    </location>
</feature>
<feature type="strand" evidence="16">
    <location>
        <begin position="49"/>
        <end position="58"/>
    </location>
</feature>
<feature type="turn" evidence="17">
    <location>
        <begin position="63"/>
        <end position="65"/>
    </location>
</feature>
<feature type="strand" evidence="16">
    <location>
        <begin position="73"/>
        <end position="78"/>
    </location>
</feature>
<feature type="strand" evidence="16">
    <location>
        <begin position="84"/>
        <end position="91"/>
    </location>
</feature>
<feature type="strand" evidence="16">
    <location>
        <begin position="98"/>
        <end position="107"/>
    </location>
</feature>
<feature type="strand" evidence="16">
    <location>
        <begin position="113"/>
        <end position="117"/>
    </location>
</feature>
<feature type="helix" evidence="16">
    <location>
        <begin position="119"/>
        <end position="121"/>
    </location>
</feature>
<feature type="strand" evidence="16">
    <location>
        <begin position="125"/>
        <end position="135"/>
    </location>
</feature>
<feature type="strand" evidence="16">
    <location>
        <begin position="137"/>
        <end position="149"/>
    </location>
</feature>
<feature type="strand" evidence="16">
    <location>
        <begin position="152"/>
        <end position="164"/>
    </location>
</feature>
<feature type="helix" evidence="16">
    <location>
        <begin position="168"/>
        <end position="180"/>
    </location>
</feature>
<feature type="helix" evidence="16">
    <location>
        <begin position="185"/>
        <end position="187"/>
    </location>
</feature>
<feature type="strand" evidence="16">
    <location>
        <begin position="188"/>
        <end position="192"/>
    </location>
</feature>
<feature type="strand" evidence="16">
    <location>
        <begin position="195"/>
        <end position="197"/>
    </location>
</feature>
<evidence type="ECO:0000250" key="1"/>
<evidence type="ECO:0000250" key="2">
    <source>
        <dbReference type="UniProtKB" id="P80188"/>
    </source>
</evidence>
<evidence type="ECO:0000255" key="3"/>
<evidence type="ECO:0000269" key="4">
    <source>
    </source>
</evidence>
<evidence type="ECO:0000269" key="5">
    <source>
    </source>
</evidence>
<evidence type="ECO:0000269" key="6">
    <source>
    </source>
</evidence>
<evidence type="ECO:0000269" key="7">
    <source>
    </source>
</evidence>
<evidence type="ECO:0000269" key="8">
    <source>
    </source>
</evidence>
<evidence type="ECO:0000269" key="9">
    <source>
    </source>
</evidence>
<evidence type="ECO:0000269" key="10">
    <source>
    </source>
</evidence>
<evidence type="ECO:0000269" key="11">
    <source>
    </source>
</evidence>
<evidence type="ECO:0000303" key="12">
    <source>
    </source>
</evidence>
<evidence type="ECO:0000303" key="13">
    <source>
    </source>
</evidence>
<evidence type="ECO:0000305" key="14"/>
<evidence type="ECO:0007744" key="15">
    <source>
        <dbReference type="PDB" id="3S26"/>
    </source>
</evidence>
<evidence type="ECO:0007829" key="16">
    <source>
        <dbReference type="PDB" id="3S26"/>
    </source>
</evidence>
<evidence type="ECO:0007829" key="17">
    <source>
        <dbReference type="PDB" id="3U9P"/>
    </source>
</evidence>
<protein>
    <recommendedName>
        <fullName>Neutrophil gelatinase-associated lipocalin</fullName>
        <shortName>NGAL</shortName>
    </recommendedName>
    <alternativeName>
        <fullName>Lipocalin-2</fullName>
    </alternativeName>
    <alternativeName>
        <fullName evidence="12">Oncogene 24p3</fullName>
        <shortName evidence="13">24p3</shortName>
    </alternativeName>
    <alternativeName>
        <fullName evidence="13">SV-40-induced 24p3 protein</fullName>
    </alternativeName>
    <alternativeName>
        <fullName>Siderocalin LCN2</fullName>
    </alternativeName>
    <alternativeName>
        <fullName>p25</fullName>
    </alternativeName>
</protein>
<comment type="function">
    <text evidence="2 4 5 6 7 8">Iron-trafficking protein involved in multiple processes such as apoptosis, innate immunity and renal development (PubMed:12453413). Binds iron through association with 2,3-dihydroxybenzoic acid (2,3-DHBA), a siderophore that shares structural similarities with bacterial enterobactin, and delivers or removes iron from the cell, depending on the context. Iron-bound form (holo-24p3) is internalized following binding to the SLC22A17 (24p3R) receptor, leading to release of iron and subsequent increase of intracellular iron concentration. In contrast, association of the iron-free form (apo-24p3) with the SLC22A17 (24p3R) receptor is followed by association with an intracellular siderophore, iron chelation and iron transfer to the extracellular medium, thereby reducing intracellular iron concentration. Involved in apoptosis due to interleukin-3 (IL3) deprivation: iron-loaded form increases intracellular iron concentration without promoting apoptosis, while iron-free form decreases intracellular iron levels, inducing expression of the proapoptotic protein BCL2L11/BIM, resulting in apoptosis. Involved in innate immunity; limits bacterial proliferation by sequestering iron bound to microbial siderophores, such as enterobactin (PubMed:15531878, PubMed:16446425). Can also bind siderophores from M.tuberculosis (By similarity).</text>
</comment>
<comment type="subunit">
    <text evidence="2">Monomer. Homodimer; disulfide-linked. Heterodimer; disulfide-linked with MMP9.</text>
</comment>
<comment type="subcellular location">
    <subcellularLocation>
        <location evidence="4 8 11">Secreted</location>
    </subcellularLocation>
    <subcellularLocation>
        <location evidence="2">Cytoplasmic granule lumen</location>
    </subcellularLocation>
    <subcellularLocation>
        <location evidence="2">Cytoplasmic vesicle lumen</location>
    </subcellularLocation>
    <text evidence="2 6">Upon binding to the SLC22A17 (24p3R) receptor, it is internalized (PubMed:16377569). Releases the bound iron in the acidic lumen of cytoplasmic vesicles (By similarity).</text>
</comment>
<comment type="tissue specificity">
    <text evidence="10 11">Expressed in the cortical tubules of the kidney (at protein level) (PubMed:30418175). Also expressed in the medullary tubules of the kidney (PubMed:30418175). Detected in lung, spleen, uterus, vagina and epididymis (PubMed:8687399).</text>
</comment>
<comment type="induction">
    <text evidence="5 10">Upon Toll-like receptor (TLRs) stimuli (PubMed:15531878). By SV-40 (PubMed:15531878). By insulin (PubMed:30418175).</text>
</comment>
<comment type="PTM">
    <text evidence="9 11">N-glycosylated.</text>
</comment>
<comment type="disruption phenotype">
    <text evidence="5 7">Mice are normal with no visible phenotype. They however show an increased susceptibility to bacterial infections. Neutrophils show significantly less bacteriostatic activity.</text>
</comment>
<comment type="similarity">
    <text evidence="14">Belongs to the calycin superfamily. Lipocalin family.</text>
</comment>
<organism>
    <name type="scientific">Mus musculus</name>
    <name type="common">Mouse</name>
    <dbReference type="NCBI Taxonomy" id="10090"/>
    <lineage>
        <taxon>Eukaryota</taxon>
        <taxon>Metazoa</taxon>
        <taxon>Chordata</taxon>
        <taxon>Craniata</taxon>
        <taxon>Vertebrata</taxon>
        <taxon>Euteleostomi</taxon>
        <taxon>Mammalia</taxon>
        <taxon>Eutheria</taxon>
        <taxon>Euarchontoglires</taxon>
        <taxon>Glires</taxon>
        <taxon>Rodentia</taxon>
        <taxon>Myomorpha</taxon>
        <taxon>Muroidea</taxon>
        <taxon>Muridae</taxon>
        <taxon>Murinae</taxon>
        <taxon>Mus</taxon>
        <taxon>Mus</taxon>
    </lineage>
</organism>
<accession>P11672</accession>
<accession>Q3UE34</accession>
<reference key="1">
    <citation type="journal article" date="1989" name="Oncogene">
        <title>SV40-induced expression of mouse gene 24p3 involves a post-transcriptional mechanism.</title>
        <authorList>
            <person name="Hraba-Renevey S."/>
            <person name="Turler H."/>
            <person name="Kress M."/>
            <person name="Salomon C."/>
            <person name="Weil R."/>
        </authorList>
    </citation>
    <scope>NUCLEOTIDE SEQUENCE [MRNA]</scope>
    <source>
        <strain>SWR/J</strain>
        <tissue>Kidney</tissue>
    </source>
</reference>
<reference key="2">
    <citation type="journal article" date="1996" name="Gene">
        <title>An apparent autocrine mechanism amplifies the dexamethasone- and retinoic acid-induced expression of mouse lipocalin-encoding gene 24p3.</title>
        <authorList>
            <person name="Garay-Rojas E."/>
            <person name="Harper M."/>
            <person name="Hraba-Renevey S."/>
            <person name="Kress M."/>
        </authorList>
    </citation>
    <scope>NUCLEOTIDE SEQUENCE [GENOMIC DNA]</scope>
</reference>
<reference key="3">
    <citation type="journal article" date="2005" name="Science">
        <title>The transcriptional landscape of the mammalian genome.</title>
        <authorList>
            <person name="Carninci P."/>
            <person name="Kasukawa T."/>
            <person name="Katayama S."/>
            <person name="Gough J."/>
            <person name="Frith M.C."/>
            <person name="Maeda N."/>
            <person name="Oyama R."/>
            <person name="Ravasi T."/>
            <person name="Lenhard B."/>
            <person name="Wells C."/>
            <person name="Kodzius R."/>
            <person name="Shimokawa K."/>
            <person name="Bajic V.B."/>
            <person name="Brenner S.E."/>
            <person name="Batalov S."/>
            <person name="Forrest A.R."/>
            <person name="Zavolan M."/>
            <person name="Davis M.J."/>
            <person name="Wilming L.G."/>
            <person name="Aidinis V."/>
            <person name="Allen J.E."/>
            <person name="Ambesi-Impiombato A."/>
            <person name="Apweiler R."/>
            <person name="Aturaliya R.N."/>
            <person name="Bailey T.L."/>
            <person name="Bansal M."/>
            <person name="Baxter L."/>
            <person name="Beisel K.W."/>
            <person name="Bersano T."/>
            <person name="Bono H."/>
            <person name="Chalk A.M."/>
            <person name="Chiu K.P."/>
            <person name="Choudhary V."/>
            <person name="Christoffels A."/>
            <person name="Clutterbuck D.R."/>
            <person name="Crowe M.L."/>
            <person name="Dalla E."/>
            <person name="Dalrymple B.P."/>
            <person name="de Bono B."/>
            <person name="Della Gatta G."/>
            <person name="di Bernardo D."/>
            <person name="Down T."/>
            <person name="Engstrom P."/>
            <person name="Fagiolini M."/>
            <person name="Faulkner G."/>
            <person name="Fletcher C.F."/>
            <person name="Fukushima T."/>
            <person name="Furuno M."/>
            <person name="Futaki S."/>
            <person name="Gariboldi M."/>
            <person name="Georgii-Hemming P."/>
            <person name="Gingeras T.R."/>
            <person name="Gojobori T."/>
            <person name="Green R.E."/>
            <person name="Gustincich S."/>
            <person name="Harbers M."/>
            <person name="Hayashi Y."/>
            <person name="Hensch T.K."/>
            <person name="Hirokawa N."/>
            <person name="Hill D."/>
            <person name="Huminiecki L."/>
            <person name="Iacono M."/>
            <person name="Ikeo K."/>
            <person name="Iwama A."/>
            <person name="Ishikawa T."/>
            <person name="Jakt M."/>
            <person name="Kanapin A."/>
            <person name="Katoh M."/>
            <person name="Kawasawa Y."/>
            <person name="Kelso J."/>
            <person name="Kitamura H."/>
            <person name="Kitano H."/>
            <person name="Kollias G."/>
            <person name="Krishnan S.P."/>
            <person name="Kruger A."/>
            <person name="Kummerfeld S.K."/>
            <person name="Kurochkin I.V."/>
            <person name="Lareau L.F."/>
            <person name="Lazarevic D."/>
            <person name="Lipovich L."/>
            <person name="Liu J."/>
            <person name="Liuni S."/>
            <person name="McWilliam S."/>
            <person name="Madan Babu M."/>
            <person name="Madera M."/>
            <person name="Marchionni L."/>
            <person name="Matsuda H."/>
            <person name="Matsuzawa S."/>
            <person name="Miki H."/>
            <person name="Mignone F."/>
            <person name="Miyake S."/>
            <person name="Morris K."/>
            <person name="Mottagui-Tabar S."/>
            <person name="Mulder N."/>
            <person name="Nakano N."/>
            <person name="Nakauchi H."/>
            <person name="Ng P."/>
            <person name="Nilsson R."/>
            <person name="Nishiguchi S."/>
            <person name="Nishikawa S."/>
            <person name="Nori F."/>
            <person name="Ohara O."/>
            <person name="Okazaki Y."/>
            <person name="Orlando V."/>
            <person name="Pang K.C."/>
            <person name="Pavan W.J."/>
            <person name="Pavesi G."/>
            <person name="Pesole G."/>
            <person name="Petrovsky N."/>
            <person name="Piazza S."/>
            <person name="Reed J."/>
            <person name="Reid J.F."/>
            <person name="Ring B.Z."/>
            <person name="Ringwald M."/>
            <person name="Rost B."/>
            <person name="Ruan Y."/>
            <person name="Salzberg S.L."/>
            <person name="Sandelin A."/>
            <person name="Schneider C."/>
            <person name="Schoenbach C."/>
            <person name="Sekiguchi K."/>
            <person name="Semple C.A."/>
            <person name="Seno S."/>
            <person name="Sessa L."/>
            <person name="Sheng Y."/>
            <person name="Shibata Y."/>
            <person name="Shimada H."/>
            <person name="Shimada K."/>
            <person name="Silva D."/>
            <person name="Sinclair B."/>
            <person name="Sperling S."/>
            <person name="Stupka E."/>
            <person name="Sugiura K."/>
            <person name="Sultana R."/>
            <person name="Takenaka Y."/>
            <person name="Taki K."/>
            <person name="Tammoja K."/>
            <person name="Tan S.L."/>
            <person name="Tang S."/>
            <person name="Taylor M.S."/>
            <person name="Tegner J."/>
            <person name="Teichmann S.A."/>
            <person name="Ueda H.R."/>
            <person name="van Nimwegen E."/>
            <person name="Verardo R."/>
            <person name="Wei C.L."/>
            <person name="Yagi K."/>
            <person name="Yamanishi H."/>
            <person name="Zabarovsky E."/>
            <person name="Zhu S."/>
            <person name="Zimmer A."/>
            <person name="Hide W."/>
            <person name="Bult C."/>
            <person name="Grimmond S.M."/>
            <person name="Teasdale R.D."/>
            <person name="Liu E.T."/>
            <person name="Brusic V."/>
            <person name="Quackenbush J."/>
            <person name="Wahlestedt C."/>
            <person name="Mattick J.S."/>
            <person name="Hume D.A."/>
            <person name="Kai C."/>
            <person name="Sasaki D."/>
            <person name="Tomaru Y."/>
            <person name="Fukuda S."/>
            <person name="Kanamori-Katayama M."/>
            <person name="Suzuki M."/>
            <person name="Aoki J."/>
            <person name="Arakawa T."/>
            <person name="Iida J."/>
            <person name="Imamura K."/>
            <person name="Itoh M."/>
            <person name="Kato T."/>
            <person name="Kawaji H."/>
            <person name="Kawagashira N."/>
            <person name="Kawashima T."/>
            <person name="Kojima M."/>
            <person name="Kondo S."/>
            <person name="Konno H."/>
            <person name="Nakano K."/>
            <person name="Ninomiya N."/>
            <person name="Nishio T."/>
            <person name="Okada M."/>
            <person name="Plessy C."/>
            <person name="Shibata K."/>
            <person name="Shiraki T."/>
            <person name="Suzuki S."/>
            <person name="Tagami M."/>
            <person name="Waki K."/>
            <person name="Watahiki A."/>
            <person name="Okamura-Oho Y."/>
            <person name="Suzuki H."/>
            <person name="Kawai J."/>
            <person name="Hayashizaki Y."/>
        </authorList>
    </citation>
    <scope>NUCLEOTIDE SEQUENCE [LARGE SCALE MRNA]</scope>
    <source>
        <strain>C57BL/6J</strain>
        <tissue>Bone marrow</tissue>
    </source>
</reference>
<reference key="4">
    <citation type="journal article" date="2009" name="PLoS Biol.">
        <title>Lineage-specific biology revealed by a finished genome assembly of the mouse.</title>
        <authorList>
            <person name="Church D.M."/>
            <person name="Goodstadt L."/>
            <person name="Hillier L.W."/>
            <person name="Zody M.C."/>
            <person name="Goldstein S."/>
            <person name="She X."/>
            <person name="Bult C.J."/>
            <person name="Agarwala R."/>
            <person name="Cherry J.L."/>
            <person name="DiCuccio M."/>
            <person name="Hlavina W."/>
            <person name="Kapustin Y."/>
            <person name="Meric P."/>
            <person name="Maglott D."/>
            <person name="Birtle Z."/>
            <person name="Marques A.C."/>
            <person name="Graves T."/>
            <person name="Zhou S."/>
            <person name="Teague B."/>
            <person name="Potamousis K."/>
            <person name="Churas C."/>
            <person name="Place M."/>
            <person name="Herschleb J."/>
            <person name="Runnheim R."/>
            <person name="Forrest D."/>
            <person name="Amos-Landgraf J."/>
            <person name="Schwartz D.C."/>
            <person name="Cheng Z."/>
            <person name="Lindblad-Toh K."/>
            <person name="Eichler E.E."/>
            <person name="Ponting C.P."/>
        </authorList>
    </citation>
    <scope>NUCLEOTIDE SEQUENCE [LARGE SCALE GENOMIC DNA]</scope>
    <source>
        <strain>C57BL/6J</strain>
    </source>
</reference>
<reference key="5">
    <citation type="submission" date="2005-07" db="EMBL/GenBank/DDBJ databases">
        <authorList>
            <person name="Mural R.J."/>
            <person name="Adams M.D."/>
            <person name="Myers E.W."/>
            <person name="Smith H.O."/>
            <person name="Venter J.C."/>
        </authorList>
    </citation>
    <scope>NUCLEOTIDE SEQUENCE [LARGE SCALE GENOMIC DNA]</scope>
</reference>
<reference key="6">
    <citation type="journal article" date="2004" name="Genome Res.">
        <title>The status, quality, and expansion of the NIH full-length cDNA project: the Mammalian Gene Collection (MGC).</title>
        <authorList>
            <consortium name="The MGC Project Team"/>
        </authorList>
    </citation>
    <scope>NUCLEOTIDE SEQUENCE [LARGE SCALE MRNA]</scope>
    <source>
        <tissue>Brain</tissue>
    </source>
</reference>
<reference key="7">
    <citation type="journal article" date="1996" name="Biochem. J.">
        <title>Demonstration of a glycoprotein derived from the 24p3 gene in mouse uterine luminal fluid.</title>
        <authorList>
            <person name="Chu S.T."/>
            <person name="Huang H.L."/>
            <person name="Chen J.M."/>
            <person name="Chen Y.H."/>
        </authorList>
    </citation>
    <scope>NUCLEOTIDE SEQUENCE [MRNA] OF 8-200</scope>
    <scope>PARTIAL PROTEIN SEQUENCE</scope>
    <scope>GLYCOSYLATION</scope>
    <scope>SUBCELLULAR LOCATION</scope>
    <scope>TISSUE SPECIFICITY</scope>
</reference>
<reference key="8">
    <citation type="journal article" date="1991" name="Trends Biochem. Sci.">
        <title>The first lipocalin with enzymatic activity.</title>
        <authorList>
            <person name="Peitsch M.C."/>
            <person name="Boguski M.S."/>
        </authorList>
    </citation>
    <scope>SIMILARITY TO THE LIPOCALIN FAMILY</scope>
</reference>
<reference key="9">
    <citation type="journal article" date="1991" name="Biochem. Biophys. Res. Commun.">
        <title>Mouse oncogene protein 24p3 is a member of the lipocalin protein family.</title>
        <authorList>
            <person name="Flower D.R."/>
            <person name="North A.C.T."/>
            <person name="Attwood T.K."/>
        </authorList>
    </citation>
    <scope>SIMILARITY TO THE LIPOCALIN FAMILY</scope>
</reference>
<reference key="10">
    <citation type="journal article" date="2002" name="Mol. Cell">
        <title>An iron delivery pathway mediated by a lipocalin.</title>
        <authorList>
            <person name="Yang J."/>
            <person name="Goetz D."/>
            <person name="Li J.Y."/>
            <person name="Wang W."/>
            <person name="Mori K."/>
            <person name="Setlik D."/>
            <person name="Du T."/>
            <person name="Erdjument-Bromage H."/>
            <person name="Tempst P."/>
            <person name="Strong R."/>
            <person name="Barasch J."/>
        </authorList>
    </citation>
    <scope>FUNCTION</scope>
    <scope>IRON-BINDING</scope>
    <scope>SIDEROPHORE-BINDING</scope>
    <scope>SUBCELLULAR LOCATION</scope>
    <scope>IDENTIFICATION BY MASS SPECTROMETRY</scope>
</reference>
<reference key="11">
    <citation type="journal article" date="2004" name="Nature">
        <title>Lipocalin 2 mediates an innate immune response to bacterial infection by sequestrating iron.</title>
        <authorList>
            <person name="Flo T.H."/>
            <person name="Smith K.D."/>
            <person name="Sato S."/>
            <person name="Rodriguez D.J."/>
            <person name="Holmes M.A."/>
            <person name="Strong R.K."/>
            <person name="Akira S."/>
            <person name="Aderem A."/>
        </authorList>
    </citation>
    <scope>FUNCTION</scope>
    <scope>IRON-BINDING</scope>
    <scope>SIDEROPHORE-BINDING</scope>
    <scope>DISRUPTION PHENOTYPE</scope>
    <scope>INDUCTION</scope>
</reference>
<reference key="12">
    <citation type="journal article" date="2005" name="Cell">
        <title>A cell-surface receptor for lipocalin 24p3 selectively mediates apoptosis and iron uptake.</title>
        <authorList>
            <person name="Devireddy L.R."/>
            <person name="Gazin C."/>
            <person name="Zhu X."/>
            <person name="Green M.R."/>
        </authorList>
    </citation>
    <scope>FUNCTION</scope>
    <scope>INTERACTION WITH SLC22A17</scope>
    <scope>IRON-BINDING</scope>
    <scope>SUBCELLULAR LOCATION</scope>
</reference>
<reference key="13">
    <citation type="journal article" date="2006" name="Proc. Natl. Acad. Sci. U.S.A.">
        <title>Lipocalin 2-deficient mice exhibit increased sensitivity to Escherichia coli infection but not to ischemia-reperfusion injury.</title>
        <authorList>
            <person name="Berger T."/>
            <person name="Togawa A."/>
            <person name="Duncan G.S."/>
            <person name="Elia A.J."/>
            <person name="You-Ten A."/>
            <person name="Wakeham A."/>
            <person name="Fong H.E."/>
            <person name="Cheung C.C."/>
            <person name="Mak T.W."/>
        </authorList>
    </citation>
    <scope>DISRUPTION PHENOTYPE</scope>
    <scope>FUNCTION</scope>
</reference>
<reference key="14">
    <citation type="journal article" date="2010" name="Cell">
        <title>A mammalian siderophore synthesized by an enzyme with a bacterial homolog involved in enterobactin production.</title>
        <authorList>
            <person name="Devireddy L.R."/>
            <person name="Hart D.O."/>
            <person name="Goetz D.H."/>
            <person name="Green M.R."/>
        </authorList>
    </citation>
    <scope>FUNCTION</scope>
    <scope>IRON-BINDING</scope>
    <scope>SIDEROPHORE-BINDING</scope>
    <scope>SUBCELLULAR LOCATION</scope>
</reference>
<reference key="15">
    <citation type="journal article" date="2010" name="Cell">
        <title>A tissue-specific atlas of mouse protein phosphorylation and expression.</title>
        <authorList>
            <person name="Huttlin E.L."/>
            <person name="Jedrychowski M.P."/>
            <person name="Elias J.E."/>
            <person name="Goswami T."/>
            <person name="Rad R."/>
            <person name="Beausoleil S.A."/>
            <person name="Villen J."/>
            <person name="Haas W."/>
            <person name="Sowa M.E."/>
            <person name="Gygi S.P."/>
        </authorList>
    </citation>
    <scope>IDENTIFICATION BY MASS SPECTROMETRY [LARGE SCALE ANALYSIS]</scope>
    <source>
        <tissue>Liver</tissue>
        <tissue>Lung</tissue>
        <tissue>Spleen</tissue>
    </source>
</reference>
<reference key="16">
    <citation type="journal article" date="2018" name="J. Clin. Invest.">
        <title>Insulin receptor signaling regulates renal collecting duct and intercalated cell antibacterial defenses.</title>
        <authorList>
            <person name="Murtha M.J."/>
            <person name="Eichler T."/>
            <person name="Bender K."/>
            <person name="Metheny J."/>
            <person name="Li B."/>
            <person name="Schwaderer A.L."/>
            <person name="Mosquera C."/>
            <person name="James C."/>
            <person name="Schwartz L."/>
            <person name="Becknell B."/>
            <person name="Spencer J.D."/>
        </authorList>
    </citation>
    <scope>TISSUE SPECIFICITY</scope>
    <scope>INDUCTION</scope>
</reference>
<reference evidence="15" key="17">
    <citation type="journal article" date="2011" name="Nucleic Acids Res.">
        <title>Daedalus: a robust, turnkey platform for rapid production of decigram quantities of active recombinant proteins in human cell lines using novel lentiviral vectors.</title>
        <authorList>
            <person name="Bandaranayake A.D."/>
            <person name="Correnti C."/>
            <person name="Ryu B.Y."/>
            <person name="Brault M."/>
            <person name="Strong R.K."/>
            <person name="Rawlings D.J."/>
        </authorList>
    </citation>
    <scope>X-RAY CRYSTALLOGRAPHY (1.80 ANGSTROMS) OF 21-200</scope>
    <scope>DISULFIDE BOND</scope>
    <scope>GLYCOSYLATION AT ASN-85</scope>
</reference>
<keyword id="KW-0002">3D-structure</keyword>
<keyword id="KW-0053">Apoptosis</keyword>
<keyword id="KW-0968">Cytoplasmic vesicle</keyword>
<keyword id="KW-0903">Direct protein sequencing</keyword>
<keyword id="KW-1015">Disulfide bond</keyword>
<keyword id="KW-0325">Glycoprotein</keyword>
<keyword id="KW-0391">Immunity</keyword>
<keyword id="KW-0399">Innate immunity</keyword>
<keyword id="KW-0406">Ion transport</keyword>
<keyword id="KW-0408">Iron</keyword>
<keyword id="KW-0410">Iron transport</keyword>
<keyword id="KW-0873">Pyrrolidone carboxylic acid</keyword>
<keyword id="KW-1185">Reference proteome</keyword>
<keyword id="KW-0964">Secreted</keyword>
<keyword id="KW-0732">Signal</keyword>
<keyword id="KW-0813">Transport</keyword>
<gene>
    <name type="primary">Lcn2</name>
</gene>
<sequence>MALSVMCLGLALLGVLQSQAQDSTQNLIPAPSLLTVPLQPDFRSDQFRGRWYVVGLAGNAVQKKTEGSFTMYSTIYELQENNSYNVTSILVRDQDQGCRYWIRTFVPSSRAGQFTLGNMHRYPQVQSYNVQVATTDYNQFAMVFFRKTSENKQYFKITLYGRTKELSPELKERFTRFAKSLGLKDDNIIFSVPTDQCIDN</sequence>